<evidence type="ECO:0000255" key="1">
    <source>
        <dbReference type="HAMAP-Rule" id="MF_00818"/>
    </source>
</evidence>
<gene>
    <name evidence="1" type="primary">queF</name>
    <name type="ordered locus">EAT1b_1990</name>
</gene>
<keyword id="KW-0963">Cytoplasm</keyword>
<keyword id="KW-0521">NADP</keyword>
<keyword id="KW-0560">Oxidoreductase</keyword>
<keyword id="KW-0671">Queuosine biosynthesis</keyword>
<proteinExistence type="inferred from homology"/>
<organism>
    <name type="scientific">Exiguobacterium sp. (strain ATCC BAA-1283 / AT1b)</name>
    <dbReference type="NCBI Taxonomy" id="360911"/>
    <lineage>
        <taxon>Bacteria</taxon>
        <taxon>Bacillati</taxon>
        <taxon>Bacillota</taxon>
        <taxon>Bacilli</taxon>
        <taxon>Bacillales</taxon>
        <taxon>Bacillales Family XII. Incertae Sedis</taxon>
        <taxon>Exiguobacterium</taxon>
    </lineage>
</organism>
<feature type="chain" id="PRO_1000213091" description="NADPH-dependent 7-cyano-7-deazaguanine reductase">
    <location>
        <begin position="1"/>
        <end position="162"/>
    </location>
</feature>
<feature type="active site" description="Thioimide intermediate" evidence="1">
    <location>
        <position position="53"/>
    </location>
</feature>
<feature type="active site" description="Proton donor" evidence="1">
    <location>
        <position position="60"/>
    </location>
</feature>
<feature type="binding site" evidence="1">
    <location>
        <begin position="75"/>
        <end position="77"/>
    </location>
    <ligand>
        <name>substrate</name>
    </ligand>
</feature>
<feature type="binding site" evidence="1">
    <location>
        <begin position="94"/>
        <end position="95"/>
    </location>
    <ligand>
        <name>substrate</name>
    </ligand>
</feature>
<protein>
    <recommendedName>
        <fullName evidence="1">NADPH-dependent 7-cyano-7-deazaguanine reductase</fullName>
        <ecNumber evidence="1">1.7.1.13</ecNumber>
    </recommendedName>
    <alternativeName>
        <fullName evidence="1">7-cyano-7-carbaguanine reductase</fullName>
    </alternativeName>
    <alternativeName>
        <fullName evidence="1">NADPH-dependent nitrile oxidoreductase</fullName>
    </alternativeName>
    <alternativeName>
        <fullName evidence="1">PreQ(0) reductase</fullName>
    </alternativeName>
</protein>
<comment type="function">
    <text evidence="1">Catalyzes the NADPH-dependent reduction of 7-cyano-7-deazaguanine (preQ0) to 7-aminomethyl-7-deazaguanine (preQ1).</text>
</comment>
<comment type="catalytic activity">
    <reaction evidence="1">
        <text>7-aminomethyl-7-carbaguanine + 2 NADP(+) = 7-cyano-7-deazaguanine + 2 NADPH + 3 H(+)</text>
        <dbReference type="Rhea" id="RHEA:13409"/>
        <dbReference type="ChEBI" id="CHEBI:15378"/>
        <dbReference type="ChEBI" id="CHEBI:45075"/>
        <dbReference type="ChEBI" id="CHEBI:57783"/>
        <dbReference type="ChEBI" id="CHEBI:58349"/>
        <dbReference type="ChEBI" id="CHEBI:58703"/>
        <dbReference type="EC" id="1.7.1.13"/>
    </reaction>
</comment>
<comment type="pathway">
    <text evidence="1">tRNA modification; tRNA-queuosine biosynthesis.</text>
</comment>
<comment type="subcellular location">
    <subcellularLocation>
        <location evidence="1">Cytoplasm</location>
    </subcellularLocation>
</comment>
<comment type="similarity">
    <text evidence="1">Belongs to the GTP cyclohydrolase I family. QueF type 1 subfamily.</text>
</comment>
<name>QUEF_EXISA</name>
<dbReference type="EC" id="1.7.1.13" evidence="1"/>
<dbReference type="EMBL" id="CP001615">
    <property type="protein sequence ID" value="ACQ70914.1"/>
    <property type="molecule type" value="Genomic_DNA"/>
</dbReference>
<dbReference type="RefSeq" id="WP_015880473.1">
    <property type="nucleotide sequence ID" value="NC_012673.1"/>
</dbReference>
<dbReference type="SMR" id="C4L0V1"/>
<dbReference type="STRING" id="360911.EAT1b_1990"/>
<dbReference type="KEGG" id="eat:EAT1b_1990"/>
<dbReference type="eggNOG" id="COG0780">
    <property type="taxonomic scope" value="Bacteria"/>
</dbReference>
<dbReference type="HOGENOM" id="CLU_102489_0_1_9"/>
<dbReference type="OrthoDB" id="9795077at2"/>
<dbReference type="UniPathway" id="UPA00392"/>
<dbReference type="Proteomes" id="UP000000716">
    <property type="component" value="Chromosome"/>
</dbReference>
<dbReference type="GO" id="GO:0005737">
    <property type="term" value="C:cytoplasm"/>
    <property type="evidence" value="ECO:0007669"/>
    <property type="project" value="UniProtKB-SubCell"/>
</dbReference>
<dbReference type="GO" id="GO:0033739">
    <property type="term" value="F:preQ1 synthase activity"/>
    <property type="evidence" value="ECO:0007669"/>
    <property type="project" value="UniProtKB-UniRule"/>
</dbReference>
<dbReference type="GO" id="GO:0008616">
    <property type="term" value="P:queuosine biosynthetic process"/>
    <property type="evidence" value="ECO:0007669"/>
    <property type="project" value="UniProtKB-UniRule"/>
</dbReference>
<dbReference type="GO" id="GO:0006400">
    <property type="term" value="P:tRNA modification"/>
    <property type="evidence" value="ECO:0007669"/>
    <property type="project" value="UniProtKB-UniRule"/>
</dbReference>
<dbReference type="Gene3D" id="3.30.1130.10">
    <property type="match status" value="1"/>
</dbReference>
<dbReference type="HAMAP" id="MF_00818">
    <property type="entry name" value="QueF_type1"/>
    <property type="match status" value="1"/>
</dbReference>
<dbReference type="InterPro" id="IPR043133">
    <property type="entry name" value="GTP-CH-I_C/QueF"/>
</dbReference>
<dbReference type="InterPro" id="IPR050084">
    <property type="entry name" value="NADPH_dep_7-cyano-7-deazaG_red"/>
</dbReference>
<dbReference type="InterPro" id="IPR029500">
    <property type="entry name" value="QueF"/>
</dbReference>
<dbReference type="InterPro" id="IPR016856">
    <property type="entry name" value="QueF_type1"/>
</dbReference>
<dbReference type="NCBIfam" id="TIGR03139">
    <property type="entry name" value="QueF-II"/>
    <property type="match status" value="1"/>
</dbReference>
<dbReference type="PANTHER" id="PTHR34354">
    <property type="entry name" value="NADPH-DEPENDENT 7-CYANO-7-DEAZAGUANINE REDUCTASE"/>
    <property type="match status" value="1"/>
</dbReference>
<dbReference type="PANTHER" id="PTHR34354:SF1">
    <property type="entry name" value="NADPH-DEPENDENT 7-CYANO-7-DEAZAGUANINE REDUCTASE"/>
    <property type="match status" value="1"/>
</dbReference>
<dbReference type="Pfam" id="PF14489">
    <property type="entry name" value="QueF"/>
    <property type="match status" value="1"/>
</dbReference>
<dbReference type="PIRSF" id="PIRSF027377">
    <property type="entry name" value="Nitrile_oxidored_QueF"/>
    <property type="match status" value="1"/>
</dbReference>
<dbReference type="SUPFAM" id="SSF55620">
    <property type="entry name" value="Tetrahydrobiopterin biosynthesis enzymes-like"/>
    <property type="match status" value="1"/>
</dbReference>
<reference key="1">
    <citation type="journal article" date="2011" name="J. Bacteriol.">
        <title>Complete genome sequence of the Thermophilic Bacterium Exiguobacterium sp. AT1b.</title>
        <authorList>
            <person name="Vishnivetskaya T.A."/>
            <person name="Lucas S."/>
            <person name="Copeland A."/>
            <person name="Lapidus A."/>
            <person name="Glavina del Rio T."/>
            <person name="Dalin E."/>
            <person name="Tice H."/>
            <person name="Bruce D.C."/>
            <person name="Goodwin L.A."/>
            <person name="Pitluck S."/>
            <person name="Saunders E."/>
            <person name="Brettin T."/>
            <person name="Detter C."/>
            <person name="Han C."/>
            <person name="Larimer F."/>
            <person name="Land M.L."/>
            <person name="Hauser L.J."/>
            <person name="Kyrpides N.C."/>
            <person name="Ovchinnikova G."/>
            <person name="Kathariou S."/>
            <person name="Ramaley R.F."/>
            <person name="Rodrigues D.F."/>
            <person name="Hendrix C."/>
            <person name="Richardson P."/>
            <person name="Tiedje J.M."/>
        </authorList>
    </citation>
    <scope>NUCLEOTIDE SEQUENCE [LARGE SCALE GENOMIC DNA]</scope>
    <source>
        <strain>ATCC BAA-1283 / AT1b</strain>
    </source>
</reference>
<sequence>MRPEDLQDLSLLGQKSVPYIFEYTPDVLEAFPNRHPENDYFVKFNAPEFTSLCPITNQPDFATIYISYIPDEKLVESKSLKLYLFSFRNHGDFHENCINVIGKDLVKLMEPRYLEVWGKFTPRGGISIDPYYNYGKPGTKYEKMAEHRLFNHDLYPETVDNR</sequence>
<accession>C4L0V1</accession>